<name>Y390_LATSS</name>
<gene>
    <name type="ordered locus">LCA_0390</name>
</gene>
<accession>Q38YN6</accession>
<keyword id="KW-1185">Reference proteome</keyword>
<reference key="1">
    <citation type="journal article" date="2005" name="Nat. Biotechnol.">
        <title>The complete genome sequence of the meat-borne lactic acid bacterium Lactobacillus sakei 23K.</title>
        <authorList>
            <person name="Chaillou S."/>
            <person name="Champomier-Verges M.-C."/>
            <person name="Cornet M."/>
            <person name="Crutz-Le Coq A.-M."/>
            <person name="Dudez A.-M."/>
            <person name="Martin V."/>
            <person name="Beaufils S."/>
            <person name="Darbon-Rongere E."/>
            <person name="Bossy R."/>
            <person name="Loux V."/>
            <person name="Zagorec M."/>
        </authorList>
    </citation>
    <scope>NUCLEOTIDE SEQUENCE [LARGE SCALE GENOMIC DNA]</scope>
    <source>
        <strain>23K</strain>
    </source>
</reference>
<protein>
    <recommendedName>
        <fullName evidence="1">UPF0473 protein LCA_0390</fullName>
    </recommendedName>
</protein>
<evidence type="ECO:0000255" key="1">
    <source>
        <dbReference type="HAMAP-Rule" id="MF_01448"/>
    </source>
</evidence>
<comment type="similarity">
    <text evidence="1">Belongs to the UPF0473 family.</text>
</comment>
<feature type="chain" id="PRO_0000304840" description="UPF0473 protein LCA_0390">
    <location>
        <begin position="1"/>
        <end position="103"/>
    </location>
</feature>
<dbReference type="EMBL" id="CR936503">
    <property type="protein sequence ID" value="CAI54691.1"/>
    <property type="molecule type" value="Genomic_DNA"/>
</dbReference>
<dbReference type="RefSeq" id="WP_011374099.1">
    <property type="nucleotide sequence ID" value="NC_007576.1"/>
</dbReference>
<dbReference type="STRING" id="314315.LCA_0390"/>
<dbReference type="KEGG" id="lsa:LCA_0390"/>
<dbReference type="eggNOG" id="COG3906">
    <property type="taxonomic scope" value="Bacteria"/>
</dbReference>
<dbReference type="HOGENOM" id="CLU_146610_2_1_9"/>
<dbReference type="OrthoDB" id="2086132at2"/>
<dbReference type="Proteomes" id="UP000002707">
    <property type="component" value="Chromosome"/>
</dbReference>
<dbReference type="HAMAP" id="MF_01448">
    <property type="entry name" value="UPF0473"/>
    <property type="match status" value="1"/>
</dbReference>
<dbReference type="InterPro" id="IPR009711">
    <property type="entry name" value="UPF0473"/>
</dbReference>
<dbReference type="NCBIfam" id="NF010215">
    <property type="entry name" value="PRK13678.1-2"/>
    <property type="match status" value="1"/>
</dbReference>
<dbReference type="NCBIfam" id="NF010217">
    <property type="entry name" value="PRK13678.1-4"/>
    <property type="match status" value="1"/>
</dbReference>
<dbReference type="PANTHER" id="PTHR40066">
    <property type="entry name" value="UPF0473 PROTEIN CBO2561/CLC_2432"/>
    <property type="match status" value="1"/>
</dbReference>
<dbReference type="PANTHER" id="PTHR40066:SF1">
    <property type="entry name" value="UPF0473 PROTEIN CBO2561_CLC_2432"/>
    <property type="match status" value="1"/>
</dbReference>
<dbReference type="Pfam" id="PF06949">
    <property type="entry name" value="DUF1292"/>
    <property type="match status" value="1"/>
</dbReference>
<sequence>MTETNKNIHQEAEQEITLIDDQGNEELYQVLFTFDSEDYGKSYVLLYPASSAEDEEVDIQAFAFTSDVAGDASQGDLFPIEDDEEWEMVEEVLNTFLADDNMQ</sequence>
<proteinExistence type="inferred from homology"/>
<organism>
    <name type="scientific">Latilactobacillus sakei subsp. sakei (strain 23K)</name>
    <name type="common">Lactobacillus sakei subsp. sakei</name>
    <dbReference type="NCBI Taxonomy" id="314315"/>
    <lineage>
        <taxon>Bacteria</taxon>
        <taxon>Bacillati</taxon>
        <taxon>Bacillota</taxon>
        <taxon>Bacilli</taxon>
        <taxon>Lactobacillales</taxon>
        <taxon>Lactobacillaceae</taxon>
        <taxon>Latilactobacillus</taxon>
    </lineage>
</organism>